<dbReference type="EMBL" id="AJ719450">
    <property type="protein sequence ID" value="CAG31109.1"/>
    <property type="molecule type" value="mRNA"/>
</dbReference>
<dbReference type="RefSeq" id="NP_001026491.1">
    <property type="nucleotide sequence ID" value="NM_001031320.2"/>
</dbReference>
<dbReference type="RefSeq" id="NP_001383126.1">
    <property type="nucleotide sequence ID" value="NM_001396197.1"/>
</dbReference>
<dbReference type="RefSeq" id="NP_001383127.1">
    <property type="nucleotide sequence ID" value="NM_001396198.1"/>
</dbReference>
<dbReference type="RefSeq" id="XP_040561518.1">
    <property type="nucleotide sequence ID" value="XM_040705584.2"/>
</dbReference>
<dbReference type="RefSeq" id="XP_046754403.1">
    <property type="nucleotide sequence ID" value="XM_046898447.1"/>
</dbReference>
<dbReference type="RefSeq" id="XP_046779902.1">
    <property type="nucleotide sequence ID" value="XM_046923946.1"/>
</dbReference>
<dbReference type="SMR" id="Q5ZMD4"/>
<dbReference type="FunCoup" id="Q5ZMD4">
    <property type="interactions" value="257"/>
</dbReference>
<dbReference type="STRING" id="9031.ENSGALP00000038403"/>
<dbReference type="PaxDb" id="9031-ENSGALP00000038403"/>
<dbReference type="Ensembl" id="ENSGALT00010002662.1">
    <property type="protein sequence ID" value="ENSGALP00010001212.1"/>
    <property type="gene ID" value="ENSGALG00010001166.1"/>
</dbReference>
<dbReference type="Ensembl" id="ENSGALT00010002664.1">
    <property type="protein sequence ID" value="ENSGALP00010001214.1"/>
    <property type="gene ID" value="ENSGALG00010001166.1"/>
</dbReference>
<dbReference type="Ensembl" id="ENSGALT00010002665.1">
    <property type="protein sequence ID" value="ENSGALP00010001215.1"/>
    <property type="gene ID" value="ENSGALG00010001166.1"/>
</dbReference>
<dbReference type="Ensembl" id="ENSGALT00010002666.1">
    <property type="protein sequence ID" value="ENSGALP00010001216.1"/>
    <property type="gene ID" value="ENSGALG00010001166.1"/>
</dbReference>
<dbReference type="Ensembl" id="ENSGALT00010002667.1">
    <property type="protein sequence ID" value="ENSGALP00010001217.1"/>
    <property type="gene ID" value="ENSGALG00010001166.1"/>
</dbReference>
<dbReference type="Ensembl" id="ENSGALT00010002668.1">
    <property type="protein sequence ID" value="ENSGALP00010001218.1"/>
    <property type="gene ID" value="ENSGALG00010001166.1"/>
</dbReference>
<dbReference type="Ensembl" id="ENSGALT00010002669.1">
    <property type="protein sequence ID" value="ENSGALP00010001219.1"/>
    <property type="gene ID" value="ENSGALG00010001166.1"/>
</dbReference>
<dbReference type="Ensembl" id="ENSGALT00010002670.1">
    <property type="protein sequence ID" value="ENSGALP00010001220.1"/>
    <property type="gene ID" value="ENSGALG00010001166.1"/>
</dbReference>
<dbReference type="Ensembl" id="ENSGALT00010002671.1">
    <property type="protein sequence ID" value="ENSGALP00010001221.1"/>
    <property type="gene ID" value="ENSGALG00010001166.1"/>
</dbReference>
<dbReference type="GeneID" id="425013"/>
<dbReference type="KEGG" id="gga:425013"/>
<dbReference type="CTD" id="286827"/>
<dbReference type="VEuPathDB" id="HostDB:geneid_425013"/>
<dbReference type="eggNOG" id="KOG2177">
    <property type="taxonomic scope" value="Eukaryota"/>
</dbReference>
<dbReference type="GeneTree" id="ENSGT00940000160146"/>
<dbReference type="InParanoid" id="Q5ZMD4"/>
<dbReference type="OMA" id="QEYTPHI"/>
<dbReference type="OrthoDB" id="6105938at2759"/>
<dbReference type="PhylomeDB" id="Q5ZMD4"/>
<dbReference type="PRO" id="PR:Q5ZMD4"/>
<dbReference type="Proteomes" id="UP000000539">
    <property type="component" value="Chromosome 9"/>
</dbReference>
<dbReference type="GO" id="GO:0005783">
    <property type="term" value="C:endoplasmic reticulum"/>
    <property type="evidence" value="ECO:0000250"/>
    <property type="project" value="UniProtKB"/>
</dbReference>
<dbReference type="GO" id="GO:0005789">
    <property type="term" value="C:endoplasmic reticulum membrane"/>
    <property type="evidence" value="ECO:0007669"/>
    <property type="project" value="UniProtKB-SubCell"/>
</dbReference>
<dbReference type="GO" id="GO:0061630">
    <property type="term" value="F:ubiquitin protein ligase activity"/>
    <property type="evidence" value="ECO:0000318"/>
    <property type="project" value="GO_Central"/>
</dbReference>
<dbReference type="GO" id="GO:0008270">
    <property type="term" value="F:zinc ion binding"/>
    <property type="evidence" value="ECO:0007669"/>
    <property type="project" value="UniProtKB-KW"/>
</dbReference>
<dbReference type="GO" id="GO:0045087">
    <property type="term" value="P:innate immune response"/>
    <property type="evidence" value="ECO:0000318"/>
    <property type="project" value="GO_Central"/>
</dbReference>
<dbReference type="GO" id="GO:0043124">
    <property type="term" value="P:negative regulation of canonical NF-kappaB signal transduction"/>
    <property type="evidence" value="ECO:0000318"/>
    <property type="project" value="GO_Central"/>
</dbReference>
<dbReference type="CDD" id="cd19790">
    <property type="entry name" value="Bbox2_TRIM59_C-XI"/>
    <property type="match status" value="1"/>
</dbReference>
<dbReference type="CDD" id="cd16763">
    <property type="entry name" value="RING-HC_TRIM59_C-V"/>
    <property type="match status" value="1"/>
</dbReference>
<dbReference type="FunFam" id="3.30.160.60:FF:000772">
    <property type="entry name" value="tripartite motif-containing protein 59"/>
    <property type="match status" value="1"/>
</dbReference>
<dbReference type="FunFam" id="3.30.40.10:FF:000297">
    <property type="entry name" value="tripartite motif-containing protein 59"/>
    <property type="match status" value="1"/>
</dbReference>
<dbReference type="Gene3D" id="3.30.160.60">
    <property type="entry name" value="Classic Zinc Finger"/>
    <property type="match status" value="1"/>
</dbReference>
<dbReference type="Gene3D" id="3.30.40.10">
    <property type="entry name" value="Zinc/RING finger domain, C3HC4 (zinc finger)"/>
    <property type="match status" value="1"/>
</dbReference>
<dbReference type="InterPro" id="IPR027370">
    <property type="entry name" value="Znf-RING_euk"/>
</dbReference>
<dbReference type="InterPro" id="IPR000315">
    <property type="entry name" value="Znf_B-box"/>
</dbReference>
<dbReference type="InterPro" id="IPR001841">
    <property type="entry name" value="Znf_RING"/>
</dbReference>
<dbReference type="InterPro" id="IPR013083">
    <property type="entry name" value="Znf_RING/FYVE/PHD"/>
</dbReference>
<dbReference type="InterPro" id="IPR017907">
    <property type="entry name" value="Znf_RING_CS"/>
</dbReference>
<dbReference type="PANTHER" id="PTHR24098">
    <property type="entry name" value="OUTER SEGMENT 5"/>
    <property type="match status" value="1"/>
</dbReference>
<dbReference type="PANTHER" id="PTHR24098:SF14">
    <property type="entry name" value="TRIPARTITE MOTIF-CONTAINING PROTEIN 59"/>
    <property type="match status" value="1"/>
</dbReference>
<dbReference type="Pfam" id="PF00643">
    <property type="entry name" value="zf-B_box"/>
    <property type="match status" value="1"/>
</dbReference>
<dbReference type="Pfam" id="PF13445">
    <property type="entry name" value="zf-RING_UBOX"/>
    <property type="match status" value="1"/>
</dbReference>
<dbReference type="SMART" id="SM00184">
    <property type="entry name" value="RING"/>
    <property type="match status" value="1"/>
</dbReference>
<dbReference type="SUPFAM" id="SSF57845">
    <property type="entry name" value="B-box zinc-binding domain"/>
    <property type="match status" value="1"/>
</dbReference>
<dbReference type="SUPFAM" id="SSF57850">
    <property type="entry name" value="RING/U-box"/>
    <property type="match status" value="1"/>
</dbReference>
<dbReference type="PROSITE" id="PS50119">
    <property type="entry name" value="ZF_BBOX"/>
    <property type="match status" value="1"/>
</dbReference>
<dbReference type="PROSITE" id="PS00518">
    <property type="entry name" value="ZF_RING_1"/>
    <property type="match status" value="1"/>
</dbReference>
<dbReference type="PROSITE" id="PS50089">
    <property type="entry name" value="ZF_RING_2"/>
    <property type="match status" value="1"/>
</dbReference>
<evidence type="ECO:0000250" key="1">
    <source>
        <dbReference type="UniProtKB" id="Q922Y2"/>
    </source>
</evidence>
<evidence type="ECO:0000255" key="2"/>
<evidence type="ECO:0000255" key="3">
    <source>
        <dbReference type="PROSITE-ProRule" id="PRU00024"/>
    </source>
</evidence>
<evidence type="ECO:0000255" key="4">
    <source>
        <dbReference type="PROSITE-ProRule" id="PRU00175"/>
    </source>
</evidence>
<evidence type="ECO:0000305" key="5"/>
<comment type="function">
    <text evidence="1">May serve as a multifunctional regulator for innate immune signaling pathways.</text>
</comment>
<comment type="subunit">
    <text evidence="1">Interacts with ECSIT.</text>
</comment>
<comment type="subcellular location">
    <subcellularLocation>
        <location evidence="1">Endoplasmic reticulum membrane</location>
        <topology evidence="5">Single-pass membrane protein</topology>
    </subcellularLocation>
</comment>
<comment type="similarity">
    <text evidence="5">Belongs to the TRIM/RBCC family.</text>
</comment>
<feature type="chain" id="PRO_0000249681" description="Tripartite motif-containing protein 59">
    <location>
        <begin position="1"/>
        <end position="408"/>
    </location>
</feature>
<feature type="transmembrane region" description="Helical" evidence="2">
    <location>
        <begin position="333"/>
        <end position="353"/>
    </location>
</feature>
<feature type="zinc finger region" description="RING-type" evidence="4">
    <location>
        <begin position="10"/>
        <end position="60"/>
    </location>
</feature>
<feature type="zinc finger region" description="B box-type" evidence="3">
    <location>
        <begin position="92"/>
        <end position="134"/>
    </location>
</feature>
<feature type="coiled-coil region" evidence="2">
    <location>
        <begin position="163"/>
        <end position="247"/>
    </location>
</feature>
<feature type="binding site" evidence="3">
    <location>
        <position position="97"/>
    </location>
    <ligand>
        <name>Zn(2+)</name>
        <dbReference type="ChEBI" id="CHEBI:29105"/>
    </ligand>
</feature>
<feature type="binding site" evidence="3">
    <location>
        <position position="100"/>
    </location>
    <ligand>
        <name>Zn(2+)</name>
        <dbReference type="ChEBI" id="CHEBI:29105"/>
    </ligand>
</feature>
<feature type="binding site" evidence="3">
    <location>
        <position position="120"/>
    </location>
    <ligand>
        <name>Zn(2+)</name>
        <dbReference type="ChEBI" id="CHEBI:29105"/>
    </ligand>
</feature>
<feature type="binding site" evidence="3">
    <location>
        <position position="126"/>
    </location>
    <ligand>
        <name>Zn(2+)</name>
        <dbReference type="ChEBI" id="CHEBI:29105"/>
    </ligand>
</feature>
<organism>
    <name type="scientific">Gallus gallus</name>
    <name type="common">Chicken</name>
    <dbReference type="NCBI Taxonomy" id="9031"/>
    <lineage>
        <taxon>Eukaryota</taxon>
        <taxon>Metazoa</taxon>
        <taxon>Chordata</taxon>
        <taxon>Craniata</taxon>
        <taxon>Vertebrata</taxon>
        <taxon>Euteleostomi</taxon>
        <taxon>Archelosauria</taxon>
        <taxon>Archosauria</taxon>
        <taxon>Dinosauria</taxon>
        <taxon>Saurischia</taxon>
        <taxon>Theropoda</taxon>
        <taxon>Coelurosauria</taxon>
        <taxon>Aves</taxon>
        <taxon>Neognathae</taxon>
        <taxon>Galloanserae</taxon>
        <taxon>Galliformes</taxon>
        <taxon>Phasianidae</taxon>
        <taxon>Phasianinae</taxon>
        <taxon>Gallus</taxon>
    </lineage>
</organism>
<keyword id="KW-0175">Coiled coil</keyword>
<keyword id="KW-0256">Endoplasmic reticulum</keyword>
<keyword id="KW-0472">Membrane</keyword>
<keyword id="KW-0479">Metal-binding</keyword>
<keyword id="KW-1185">Reference proteome</keyword>
<keyword id="KW-0812">Transmembrane</keyword>
<keyword id="KW-1133">Transmembrane helix</keyword>
<keyword id="KW-0862">Zinc</keyword>
<keyword id="KW-0863">Zinc-finger</keyword>
<protein>
    <recommendedName>
        <fullName>Tripartite motif-containing protein 59</fullName>
    </recommendedName>
</protein>
<name>TRI59_CHICK</name>
<sequence>MHQFEEELTCSICYSLFEDPRVLPCSHTFCRSCLEGVIQLSSNFSIWRPLRVPLKCPNCRSIVEIPASGTESLPINFALKAIIEKYRQEDHSDVATCSEHYRQPLNVYCLLDKKLVCGHCLTIGKHNGHPIDDLHSAYLKEKESSGKILEQLTDKHWSDVCLLIEKLKEQKAQCESIVQDDKKVVVQYFKKLSETLEHKKQVLLAALDEINRQILEEYEPHIEKLKKIREEQLELMSLNTSIQKEESPLVFLEKVDNVHQRIKALKEKELPDVKPVEVYPRVGHLLKDVWSKTEIGQINKILTPKIKLVPKRKLHSKNSEKERGKPEELLQAANPLSVTFIFTVIIAIAVLSFHKPISSVVIESIPTHISDFFGFLYQDFCTCMQNTVDVVCHKLNSLAEFLGGIVPF</sequence>
<proteinExistence type="evidence at transcript level"/>
<accession>Q5ZMD4</accession>
<gene>
    <name type="primary">TRIM59</name>
    <name type="ORF">RCJMB04_2h17</name>
</gene>
<reference key="1">
    <citation type="journal article" date="2005" name="Genome Biol.">
        <title>Full-length cDNAs from chicken bursal lymphocytes to facilitate gene function analysis.</title>
        <authorList>
            <person name="Caldwell R.B."/>
            <person name="Kierzek A.M."/>
            <person name="Arakawa H."/>
            <person name="Bezzubov Y."/>
            <person name="Zaim J."/>
            <person name="Fiedler P."/>
            <person name="Kutter S."/>
            <person name="Blagodatski A."/>
            <person name="Kostovska D."/>
            <person name="Koter M."/>
            <person name="Plachy J."/>
            <person name="Carninci P."/>
            <person name="Hayashizaki Y."/>
            <person name="Buerstedde J.-M."/>
        </authorList>
    </citation>
    <scope>NUCLEOTIDE SEQUENCE [LARGE SCALE MRNA]</scope>
    <source>
        <strain>CB</strain>
        <tissue>Bursa of Fabricius</tissue>
    </source>
</reference>